<feature type="chain" id="PRO_0000127237" description="DNA-binding protein inhibitor ID-1">
    <location>
        <begin position="1"/>
        <end position="168"/>
    </location>
</feature>
<feature type="domain" description="bHLH" evidence="2">
    <location>
        <begin position="46"/>
        <end position="98"/>
    </location>
</feature>
<feature type="region of interest" description="Interaction with IFI204" evidence="1">
    <location>
        <begin position="53"/>
        <end position="106"/>
    </location>
</feature>
<feature type="short sequence motif" description="Nuclear export signal">
    <location>
        <begin position="91"/>
        <end position="104"/>
    </location>
</feature>
<feature type="splice variant" id="VSP_002109" description="In isoform Short." evidence="8">
    <original>VRSESEYYIILQWETEATGGGCPPSLLFRRIAI</original>
    <variation>AACVPADDRILCR</variation>
    <location>
        <begin position="136"/>
        <end position="168"/>
    </location>
</feature>
<feature type="sequence conflict" description="In Ref. 3; BAB25564." evidence="9" ref="3">
    <original>S</original>
    <variation>A</variation>
    <location>
        <position position="140"/>
    </location>
</feature>
<feature type="helix" evidence="10">
    <location>
        <begin position="62"/>
        <end position="72"/>
    </location>
</feature>
<feature type="strand" evidence="10">
    <location>
        <begin position="78"/>
        <end position="80"/>
    </location>
</feature>
<feature type="helix" evidence="10">
    <location>
        <begin position="84"/>
        <end position="102"/>
    </location>
</feature>
<organism>
    <name type="scientific">Mus musculus</name>
    <name type="common">Mouse</name>
    <dbReference type="NCBI Taxonomy" id="10090"/>
    <lineage>
        <taxon>Eukaryota</taxon>
        <taxon>Metazoa</taxon>
        <taxon>Chordata</taxon>
        <taxon>Craniata</taxon>
        <taxon>Vertebrata</taxon>
        <taxon>Euteleostomi</taxon>
        <taxon>Mammalia</taxon>
        <taxon>Eutheria</taxon>
        <taxon>Euarchontoglires</taxon>
        <taxon>Glires</taxon>
        <taxon>Rodentia</taxon>
        <taxon>Myomorpha</taxon>
        <taxon>Muroidea</taxon>
        <taxon>Muridae</taxon>
        <taxon>Murinae</taxon>
        <taxon>Mus</taxon>
        <taxon>Mus</taxon>
    </lineage>
</organism>
<dbReference type="EMBL" id="M31885">
    <property type="protein sequence ID" value="AAA37879.1"/>
    <property type="status" value="ALT_INIT"/>
    <property type="molecule type" value="mRNA"/>
</dbReference>
<dbReference type="EMBL" id="U43884">
    <property type="protein sequence ID" value="AAC52760.1"/>
    <property type="molecule type" value="mRNA"/>
</dbReference>
<dbReference type="EMBL" id="AK008264">
    <property type="protein sequence ID" value="BAB25564.1"/>
    <property type="molecule type" value="mRNA"/>
</dbReference>
<dbReference type="CCDS" id="CCDS16897.1">
    <molecule id="P20067-2"/>
</dbReference>
<dbReference type="CCDS" id="CCDS89567.1">
    <molecule id="P20067-1"/>
</dbReference>
<dbReference type="PIR" id="A34690">
    <property type="entry name" value="A34690"/>
</dbReference>
<dbReference type="PIR" id="S72171">
    <property type="entry name" value="S72171"/>
</dbReference>
<dbReference type="RefSeq" id="NP_034625.1">
    <molecule id="P20067-2"/>
    <property type="nucleotide sequence ID" value="NM_010495.3"/>
</dbReference>
<dbReference type="PDB" id="6MGM">
    <property type="method" value="X-ray"/>
    <property type="resolution" value="1.79 A"/>
    <property type="chains" value="A/B=52-104"/>
</dbReference>
<dbReference type="PDB" id="6MGN">
    <property type="method" value="X-ray"/>
    <property type="resolution" value="1.90 A"/>
    <property type="chains" value="B=58-104"/>
</dbReference>
<dbReference type="PDB" id="6U2U">
    <property type="method" value="X-ray"/>
    <property type="resolution" value="1.50 A"/>
    <property type="chains" value="A/B=59-104"/>
</dbReference>
<dbReference type="PDBsum" id="6MGM"/>
<dbReference type="PDBsum" id="6MGN"/>
<dbReference type="PDBsum" id="6U2U"/>
<dbReference type="SMR" id="P20067"/>
<dbReference type="FunCoup" id="P20067">
    <property type="interactions" value="1258"/>
</dbReference>
<dbReference type="IntAct" id="P20067">
    <property type="interactions" value="3"/>
</dbReference>
<dbReference type="MINT" id="P20067"/>
<dbReference type="STRING" id="10090.ENSMUSP00000092019"/>
<dbReference type="iPTMnet" id="P20067"/>
<dbReference type="PhosphoSitePlus" id="P20067"/>
<dbReference type="PaxDb" id="10090-ENSMUSP00000092019"/>
<dbReference type="ProteomicsDB" id="267189">
    <molecule id="P20067-1"/>
</dbReference>
<dbReference type="ProteomicsDB" id="267190">
    <molecule id="P20067-2"/>
</dbReference>
<dbReference type="Pumba" id="P20067"/>
<dbReference type="Antibodypedia" id="25205">
    <property type="antibodies" value="415 antibodies from 37 providers"/>
</dbReference>
<dbReference type="Ensembl" id="ENSMUST00000038368.9">
    <molecule id="P20067-2"/>
    <property type="protein sequence ID" value="ENSMUSP00000092019.5"/>
    <property type="gene ID" value="ENSMUSG00000042745.10"/>
</dbReference>
<dbReference type="AGR" id="MGI:96396"/>
<dbReference type="MGI" id="MGI:96396">
    <property type="gene designation" value="Id1"/>
</dbReference>
<dbReference type="VEuPathDB" id="HostDB:ENSMUSG00000042745"/>
<dbReference type="eggNOG" id="ENOG502RZP5">
    <property type="taxonomic scope" value="Eukaryota"/>
</dbReference>
<dbReference type="GeneTree" id="ENSGT00940000161109"/>
<dbReference type="HOGENOM" id="CLU_116790_0_0_1"/>
<dbReference type="InParanoid" id="P20067"/>
<dbReference type="OMA" id="LDMKGCY"/>
<dbReference type="PhylomeDB" id="P20067"/>
<dbReference type="TreeFam" id="TF326217"/>
<dbReference type="Reactome" id="R-MMU-2559585">
    <property type="pathway name" value="Oncogene Induced Senescence"/>
</dbReference>
<dbReference type="ChiTaRS" id="Id1">
    <property type="organism name" value="mouse"/>
</dbReference>
<dbReference type="PRO" id="PR:P20067"/>
<dbReference type="Proteomes" id="UP000000589">
    <property type="component" value="Chromosome 2"/>
</dbReference>
<dbReference type="RNAct" id="P20067">
    <property type="molecule type" value="protein"/>
</dbReference>
<dbReference type="Bgee" id="ENSMUSG00000042745">
    <property type="expression patterns" value="Expressed in mucous cell of stomach and 364 other cell types or tissues"/>
</dbReference>
<dbReference type="ExpressionAtlas" id="P20067">
    <property type="expression patterns" value="baseline and differential"/>
</dbReference>
<dbReference type="GO" id="GO:0005737">
    <property type="term" value="C:cytoplasm"/>
    <property type="evidence" value="ECO:0000314"/>
    <property type="project" value="MGI"/>
</dbReference>
<dbReference type="GO" id="GO:0005654">
    <property type="term" value="C:nucleoplasm"/>
    <property type="evidence" value="ECO:0007669"/>
    <property type="project" value="Ensembl"/>
</dbReference>
<dbReference type="GO" id="GO:0005634">
    <property type="term" value="C:nucleus"/>
    <property type="evidence" value="ECO:0000314"/>
    <property type="project" value="MGI"/>
</dbReference>
<dbReference type="GO" id="GO:0046983">
    <property type="term" value="F:protein dimerization activity"/>
    <property type="evidence" value="ECO:0007669"/>
    <property type="project" value="InterPro"/>
</dbReference>
<dbReference type="GO" id="GO:0140416">
    <property type="term" value="F:transcription regulator inhibitor activity"/>
    <property type="evidence" value="ECO:0000314"/>
    <property type="project" value="UniProtKB"/>
</dbReference>
<dbReference type="GO" id="GO:0006915">
    <property type="term" value="P:apoptotic process"/>
    <property type="evidence" value="ECO:0000315"/>
    <property type="project" value="MGI"/>
</dbReference>
<dbReference type="GO" id="GO:0030509">
    <property type="term" value="P:BMP signaling pathway"/>
    <property type="evidence" value="ECO:0000314"/>
    <property type="project" value="MGI"/>
</dbReference>
<dbReference type="GO" id="GO:0007623">
    <property type="term" value="P:circadian rhythm"/>
    <property type="evidence" value="ECO:0000270"/>
    <property type="project" value="UniProtKB"/>
</dbReference>
<dbReference type="GO" id="GO:0032963">
    <property type="term" value="P:collagen metabolic process"/>
    <property type="evidence" value="ECO:0000315"/>
    <property type="project" value="MGI"/>
</dbReference>
<dbReference type="GO" id="GO:0072577">
    <property type="term" value="P:endothelial cell apoptotic process"/>
    <property type="evidence" value="ECO:0000315"/>
    <property type="project" value="MGI"/>
</dbReference>
<dbReference type="GO" id="GO:0001886">
    <property type="term" value="P:endothelial cell morphogenesis"/>
    <property type="evidence" value="ECO:0000315"/>
    <property type="project" value="MGI"/>
</dbReference>
<dbReference type="GO" id="GO:0007507">
    <property type="term" value="P:heart development"/>
    <property type="evidence" value="ECO:0000316"/>
    <property type="project" value="MGI"/>
</dbReference>
<dbReference type="GO" id="GO:0060425">
    <property type="term" value="P:lung morphogenesis"/>
    <property type="evidence" value="ECO:0000315"/>
    <property type="project" value="MGI"/>
</dbReference>
<dbReference type="GO" id="GO:0060426">
    <property type="term" value="P:lung vasculature development"/>
    <property type="evidence" value="ECO:0000315"/>
    <property type="project" value="MGI"/>
</dbReference>
<dbReference type="GO" id="GO:0120163">
    <property type="term" value="P:negative regulation of cold-induced thermogenesis"/>
    <property type="evidence" value="ECO:0000315"/>
    <property type="project" value="YuBioLab"/>
</dbReference>
<dbReference type="GO" id="GO:0045892">
    <property type="term" value="P:negative regulation of DNA-templated transcription"/>
    <property type="evidence" value="ECO:0000314"/>
    <property type="project" value="UniProtKB"/>
</dbReference>
<dbReference type="GO" id="GO:2000352">
    <property type="term" value="P:negative regulation of endothelial cell apoptotic process"/>
    <property type="evidence" value="ECO:0000315"/>
    <property type="project" value="MGI"/>
</dbReference>
<dbReference type="GO" id="GO:0010629">
    <property type="term" value="P:negative regulation of gene expression"/>
    <property type="evidence" value="ECO:0000315"/>
    <property type="project" value="MGI"/>
</dbReference>
<dbReference type="GO" id="GO:0045668">
    <property type="term" value="P:negative regulation of osteoblast differentiation"/>
    <property type="evidence" value="ECO:0000316"/>
    <property type="project" value="MGI"/>
</dbReference>
<dbReference type="GO" id="GO:0000122">
    <property type="term" value="P:negative regulation of transcription by RNA polymerase II"/>
    <property type="evidence" value="ECO:0000314"/>
    <property type="project" value="MGI"/>
</dbReference>
<dbReference type="GO" id="GO:0010628">
    <property type="term" value="P:positive regulation of gene expression"/>
    <property type="evidence" value="ECO:0000314"/>
    <property type="project" value="UniProtKB"/>
</dbReference>
<dbReference type="GO" id="GO:0031648">
    <property type="term" value="P:protein destabilization"/>
    <property type="evidence" value="ECO:0000314"/>
    <property type="project" value="MGI"/>
</dbReference>
<dbReference type="GO" id="GO:0045765">
    <property type="term" value="P:regulation of angiogenesis"/>
    <property type="evidence" value="ECO:0000315"/>
    <property type="project" value="MGI"/>
</dbReference>
<dbReference type="GO" id="GO:0043408">
    <property type="term" value="P:regulation of MAPK cascade"/>
    <property type="evidence" value="ECO:0000315"/>
    <property type="project" value="MGI"/>
</dbReference>
<dbReference type="GO" id="GO:0046677">
    <property type="term" value="P:response to antibiotic"/>
    <property type="evidence" value="ECO:0000315"/>
    <property type="project" value="MGI"/>
</dbReference>
<dbReference type="CDD" id="cd19691">
    <property type="entry name" value="bHLH_dnHLH_ID1"/>
    <property type="match status" value="1"/>
</dbReference>
<dbReference type="FunFam" id="4.10.280.10:FF:000039">
    <property type="entry name" value="DNA-binding protein inhibitor ID-3"/>
    <property type="match status" value="1"/>
</dbReference>
<dbReference type="Gene3D" id="4.10.280.10">
    <property type="entry name" value="Helix-loop-helix DNA-binding domain"/>
    <property type="match status" value="1"/>
</dbReference>
<dbReference type="InterPro" id="IPR011598">
    <property type="entry name" value="bHLH_dom"/>
</dbReference>
<dbReference type="InterPro" id="IPR026052">
    <property type="entry name" value="DNA-bd_prot-inh"/>
</dbReference>
<dbReference type="InterPro" id="IPR036638">
    <property type="entry name" value="HLH_DNA-bd_sf"/>
</dbReference>
<dbReference type="PANTHER" id="PTHR11723">
    <property type="entry name" value="DNA-BINDING PROTEIN INHIBITOR"/>
    <property type="match status" value="1"/>
</dbReference>
<dbReference type="PANTHER" id="PTHR11723:SF4">
    <property type="entry name" value="DNA-BINDING PROTEIN INHIBITOR ID-1"/>
    <property type="match status" value="1"/>
</dbReference>
<dbReference type="Pfam" id="PF00010">
    <property type="entry name" value="HLH"/>
    <property type="match status" value="1"/>
</dbReference>
<dbReference type="SMART" id="SM00353">
    <property type="entry name" value="HLH"/>
    <property type="match status" value="1"/>
</dbReference>
<dbReference type="SUPFAM" id="SSF47459">
    <property type="entry name" value="HLH, helix-loop-helix DNA-binding domain"/>
    <property type="match status" value="1"/>
</dbReference>
<dbReference type="PROSITE" id="PS50888">
    <property type="entry name" value="BHLH"/>
    <property type="match status" value="1"/>
</dbReference>
<reference key="1">
    <citation type="journal article" date="1990" name="Cell">
        <title>The protein Id: a negative regulator of helix-loop-helix DNA binding proteins.</title>
        <authorList>
            <person name="Benezra R."/>
            <person name="Davis R.L."/>
            <person name="Lockshon D."/>
            <person name="Turner D.L."/>
            <person name="Weintraub H."/>
        </authorList>
    </citation>
    <scope>NUCLEOTIDE SEQUENCE [MRNA] (ISOFORM SHORT)</scope>
</reference>
<reference key="2">
    <citation type="journal article" date="1996" name="Biochim. Biophys. Acta">
        <title>Molecular cloning of the cDNA encoding a helix-loop-helix protein, mouse ID1B: tissue-specific expression of ID1A and ID1B genes.</title>
        <authorList>
            <person name="Hernandez M.-C."/>
            <person name="Andres-Barquin P.J."/>
            <person name="Israel M.A."/>
        </authorList>
    </citation>
    <scope>NUCLEOTIDE SEQUENCE [MRNA] (ISOFORM LONG)</scope>
    <source>
        <strain>Swiss albino</strain>
        <tissue>Brain</tissue>
    </source>
</reference>
<reference key="3">
    <citation type="journal article" date="2005" name="Science">
        <title>The transcriptional landscape of the mammalian genome.</title>
        <authorList>
            <person name="Carninci P."/>
            <person name="Kasukawa T."/>
            <person name="Katayama S."/>
            <person name="Gough J."/>
            <person name="Frith M.C."/>
            <person name="Maeda N."/>
            <person name="Oyama R."/>
            <person name="Ravasi T."/>
            <person name="Lenhard B."/>
            <person name="Wells C."/>
            <person name="Kodzius R."/>
            <person name="Shimokawa K."/>
            <person name="Bajic V.B."/>
            <person name="Brenner S.E."/>
            <person name="Batalov S."/>
            <person name="Forrest A.R."/>
            <person name="Zavolan M."/>
            <person name="Davis M.J."/>
            <person name="Wilming L.G."/>
            <person name="Aidinis V."/>
            <person name="Allen J.E."/>
            <person name="Ambesi-Impiombato A."/>
            <person name="Apweiler R."/>
            <person name="Aturaliya R.N."/>
            <person name="Bailey T.L."/>
            <person name="Bansal M."/>
            <person name="Baxter L."/>
            <person name="Beisel K.W."/>
            <person name="Bersano T."/>
            <person name="Bono H."/>
            <person name="Chalk A.M."/>
            <person name="Chiu K.P."/>
            <person name="Choudhary V."/>
            <person name="Christoffels A."/>
            <person name="Clutterbuck D.R."/>
            <person name="Crowe M.L."/>
            <person name="Dalla E."/>
            <person name="Dalrymple B.P."/>
            <person name="de Bono B."/>
            <person name="Della Gatta G."/>
            <person name="di Bernardo D."/>
            <person name="Down T."/>
            <person name="Engstrom P."/>
            <person name="Fagiolini M."/>
            <person name="Faulkner G."/>
            <person name="Fletcher C.F."/>
            <person name="Fukushima T."/>
            <person name="Furuno M."/>
            <person name="Futaki S."/>
            <person name="Gariboldi M."/>
            <person name="Georgii-Hemming P."/>
            <person name="Gingeras T.R."/>
            <person name="Gojobori T."/>
            <person name="Green R.E."/>
            <person name="Gustincich S."/>
            <person name="Harbers M."/>
            <person name="Hayashi Y."/>
            <person name="Hensch T.K."/>
            <person name="Hirokawa N."/>
            <person name="Hill D."/>
            <person name="Huminiecki L."/>
            <person name="Iacono M."/>
            <person name="Ikeo K."/>
            <person name="Iwama A."/>
            <person name="Ishikawa T."/>
            <person name="Jakt M."/>
            <person name="Kanapin A."/>
            <person name="Katoh M."/>
            <person name="Kawasawa Y."/>
            <person name="Kelso J."/>
            <person name="Kitamura H."/>
            <person name="Kitano H."/>
            <person name="Kollias G."/>
            <person name="Krishnan S.P."/>
            <person name="Kruger A."/>
            <person name="Kummerfeld S.K."/>
            <person name="Kurochkin I.V."/>
            <person name="Lareau L.F."/>
            <person name="Lazarevic D."/>
            <person name="Lipovich L."/>
            <person name="Liu J."/>
            <person name="Liuni S."/>
            <person name="McWilliam S."/>
            <person name="Madan Babu M."/>
            <person name="Madera M."/>
            <person name="Marchionni L."/>
            <person name="Matsuda H."/>
            <person name="Matsuzawa S."/>
            <person name="Miki H."/>
            <person name="Mignone F."/>
            <person name="Miyake S."/>
            <person name="Morris K."/>
            <person name="Mottagui-Tabar S."/>
            <person name="Mulder N."/>
            <person name="Nakano N."/>
            <person name="Nakauchi H."/>
            <person name="Ng P."/>
            <person name="Nilsson R."/>
            <person name="Nishiguchi S."/>
            <person name="Nishikawa S."/>
            <person name="Nori F."/>
            <person name="Ohara O."/>
            <person name="Okazaki Y."/>
            <person name="Orlando V."/>
            <person name="Pang K.C."/>
            <person name="Pavan W.J."/>
            <person name="Pavesi G."/>
            <person name="Pesole G."/>
            <person name="Petrovsky N."/>
            <person name="Piazza S."/>
            <person name="Reed J."/>
            <person name="Reid J.F."/>
            <person name="Ring B.Z."/>
            <person name="Ringwald M."/>
            <person name="Rost B."/>
            <person name="Ruan Y."/>
            <person name="Salzberg S.L."/>
            <person name="Sandelin A."/>
            <person name="Schneider C."/>
            <person name="Schoenbach C."/>
            <person name="Sekiguchi K."/>
            <person name="Semple C.A."/>
            <person name="Seno S."/>
            <person name="Sessa L."/>
            <person name="Sheng Y."/>
            <person name="Shibata Y."/>
            <person name="Shimada H."/>
            <person name="Shimada K."/>
            <person name="Silva D."/>
            <person name="Sinclair B."/>
            <person name="Sperling S."/>
            <person name="Stupka E."/>
            <person name="Sugiura K."/>
            <person name="Sultana R."/>
            <person name="Takenaka Y."/>
            <person name="Taki K."/>
            <person name="Tammoja K."/>
            <person name="Tan S.L."/>
            <person name="Tang S."/>
            <person name="Taylor M.S."/>
            <person name="Tegner J."/>
            <person name="Teichmann S.A."/>
            <person name="Ueda H.R."/>
            <person name="van Nimwegen E."/>
            <person name="Verardo R."/>
            <person name="Wei C.L."/>
            <person name="Yagi K."/>
            <person name="Yamanishi H."/>
            <person name="Zabarovsky E."/>
            <person name="Zhu S."/>
            <person name="Zimmer A."/>
            <person name="Hide W."/>
            <person name="Bult C."/>
            <person name="Grimmond S.M."/>
            <person name="Teasdale R.D."/>
            <person name="Liu E.T."/>
            <person name="Brusic V."/>
            <person name="Quackenbush J."/>
            <person name="Wahlestedt C."/>
            <person name="Mattick J.S."/>
            <person name="Hume D.A."/>
            <person name="Kai C."/>
            <person name="Sasaki D."/>
            <person name="Tomaru Y."/>
            <person name="Fukuda S."/>
            <person name="Kanamori-Katayama M."/>
            <person name="Suzuki M."/>
            <person name="Aoki J."/>
            <person name="Arakawa T."/>
            <person name="Iida J."/>
            <person name="Imamura K."/>
            <person name="Itoh M."/>
            <person name="Kato T."/>
            <person name="Kawaji H."/>
            <person name="Kawagashira N."/>
            <person name="Kawashima T."/>
            <person name="Kojima M."/>
            <person name="Kondo S."/>
            <person name="Konno H."/>
            <person name="Nakano K."/>
            <person name="Ninomiya N."/>
            <person name="Nishio T."/>
            <person name="Okada M."/>
            <person name="Plessy C."/>
            <person name="Shibata K."/>
            <person name="Shiraki T."/>
            <person name="Suzuki S."/>
            <person name="Tagami M."/>
            <person name="Waki K."/>
            <person name="Watahiki A."/>
            <person name="Okamura-Oho Y."/>
            <person name="Suzuki H."/>
            <person name="Kawai J."/>
            <person name="Hayashizaki Y."/>
        </authorList>
    </citation>
    <scope>NUCLEOTIDE SEQUENCE [LARGE SCALE MRNA] (ISOFORM LONG)</scope>
    <source>
        <strain>C57BL/6J</strain>
        <tissue>Small intestine</tissue>
    </source>
</reference>
<reference key="4">
    <citation type="journal article" date="2002" name="Mol. Cell. Biol.">
        <title>The MyoD-inducible p204 protein overcomes the inhibition of myoblast differentiation by Id proteins.</title>
        <authorList>
            <person name="Liu C.-J."/>
            <person name="Ding B."/>
            <person name="Wang H."/>
            <person name="Lengyel P."/>
        </authorList>
    </citation>
    <scope>INTERACTION WITH IFI204</scope>
</reference>
<reference key="5">
    <citation type="journal article" date="2004" name="J. Mol. Biol.">
        <title>Ubiquitin-dependent degradation of Id1 and Id3 is mediated by the COP9 signalosome.</title>
        <authorList>
            <person name="Berse M."/>
            <person name="Bounpheng M."/>
            <person name="Huang X."/>
            <person name="Christy B."/>
            <person name="Pollmann C."/>
            <person name="Dubiel W."/>
        </authorList>
    </citation>
    <scope>INTERACTION WITH COPS5</scope>
</reference>
<reference key="6">
    <citation type="journal article" date="2006" name="FEBS Lett.">
        <title>Identification of the nuclear export signal in the helix-loop-helix inhibitor Id1.</title>
        <authorList>
            <person name="Makita J."/>
            <person name="Kurooka H."/>
            <person name="Mori K."/>
            <person name="Akagi Y."/>
            <person name="Yokota Y."/>
        </authorList>
    </citation>
    <scope>SUBCELLULAR LOCATION</scope>
    <scope>NUCLEAR EXPORT SIGNAL</scope>
</reference>
<reference key="7">
    <citation type="journal article" date="2006" name="J. Biol. Chem.">
        <title>p204 protein overcomes the inhibition of the differentiation of P19 murine embryonal carcinoma cells to beating cardiac myocytes by Id proteins.</title>
        <authorList>
            <person name="Ding B."/>
            <person name="Liu C.-J."/>
            <person name="Huang Y."/>
            <person name="Yu J."/>
            <person name="Kong W."/>
            <person name="Lengyel P."/>
        </authorList>
    </citation>
    <scope>FUNCTION</scope>
    <scope>INTERACTION WITH GATA4 AND NKX2-5</scope>
</reference>
<reference key="8">
    <citation type="journal article" date="2009" name="Curr. Biol.">
        <title>A role for Id2 in regulating photic entrainment of the mammalian circadian system.</title>
        <authorList>
            <person name="Duffield G.E."/>
            <person name="Watson N.P."/>
            <person name="Mantani A."/>
            <person name="Peirson S.N."/>
            <person name="Robles-Murguia M."/>
            <person name="Loros J.J."/>
            <person name="Israel M.A."/>
            <person name="Dunlap J.C."/>
        </authorList>
    </citation>
    <scope>FUNCTION</scope>
    <scope>INDUCTION</scope>
</reference>
<name>ID1_MOUSE</name>
<accession>P20067</accession>
<accession>Q61101</accession>
<accession>Q9D897</accession>
<proteinExistence type="evidence at protein level"/>
<evidence type="ECO:0000250" key="1"/>
<evidence type="ECO:0000255" key="2">
    <source>
        <dbReference type="PROSITE-ProRule" id="PRU00981"/>
    </source>
</evidence>
<evidence type="ECO:0000269" key="3">
    <source>
    </source>
</evidence>
<evidence type="ECO:0000269" key="4">
    <source>
    </source>
</evidence>
<evidence type="ECO:0000269" key="5">
    <source>
    </source>
</evidence>
<evidence type="ECO:0000269" key="6">
    <source>
    </source>
</evidence>
<evidence type="ECO:0000269" key="7">
    <source>
    </source>
</evidence>
<evidence type="ECO:0000303" key="8">
    <source>
    </source>
</evidence>
<evidence type="ECO:0000305" key="9"/>
<evidence type="ECO:0007829" key="10">
    <source>
        <dbReference type="PDB" id="6U2U"/>
    </source>
</evidence>
<gene>
    <name type="primary">Id1</name>
    <name type="synonym">Id</name>
    <name type="synonym">Id-1</name>
    <name type="synonym">Idb1</name>
</gene>
<comment type="function">
    <text evidence="6 7">Transcriptional regulator (lacking a basic DNA binding domain) which negatively regulates the basic helix-loop-helix (bHLH) transcription factors by forming heterodimers and inhibiting their DNA binding and transcriptional activity. Implicated in regulating a variety of cellular processes, including cellular growth, senescence, differentiation, apoptosis, angiogenesis, and neoplastic transformation. Inhibits skeletal muscle and cardiac myocyte differentiation. Regulates the circadian clock by repressing the transcriptional activator activity of the CLOCK-BMAL1 heterodimer.</text>
</comment>
<comment type="subunit">
    <text evidence="1 3 4 6">Heterodimer with other HLH proteins. Interacts with CLOCK and BMAL1 (By similarity). Interacts with COPS5, IFI204, GATA4 and NKX2-5.</text>
</comment>
<comment type="subcellular location">
    <subcellularLocation>
        <location evidence="5">Cytoplasm</location>
    </subcellularLocation>
    <subcellularLocation>
        <location evidence="2 5">Nucleus</location>
    </subcellularLocation>
</comment>
<comment type="alternative products">
    <event type="alternative splicing"/>
    <isoform>
        <id>P20067-1</id>
        <name>Long</name>
        <sequence type="displayed"/>
    </isoform>
    <isoform>
        <id>P20067-2</id>
        <name>Short</name>
        <sequence type="described" ref="VSP_002109"/>
    </isoform>
    <text>Additional isoforms seem to exist.</text>
</comment>
<comment type="induction">
    <text evidence="7">Expressed in a circadian manner in the suprachiasmatic nucleus (SCN) of the brain and heart with peak levels seen between CT16 and CT20 in the SCN and between CT8 and CT12 in the heart.</text>
</comment>
<comment type="PTM">
    <text evidence="1">Polyubiquitinated; which is favored by Ifi204 and leads to proteasomal degradation.</text>
</comment>
<comment type="sequence caution" evidence="9">
    <conflict type="erroneous initiation">
        <sequence resource="EMBL-CDS" id="AAA37879"/>
    </conflict>
</comment>
<keyword id="KW-0002">3D-structure</keyword>
<keyword id="KW-0025">Alternative splicing</keyword>
<keyword id="KW-0090">Biological rhythms</keyword>
<keyword id="KW-0963">Cytoplasm</keyword>
<keyword id="KW-0217">Developmental protein</keyword>
<keyword id="KW-0539">Nucleus</keyword>
<keyword id="KW-1185">Reference proteome</keyword>
<keyword id="KW-0678">Repressor</keyword>
<keyword id="KW-0804">Transcription</keyword>
<keyword id="KW-0805">Transcription regulation</keyword>
<keyword id="KW-0832">Ubl conjugation</keyword>
<sequence length="168" mass="17914">MKVASGSAAAAAGPSCSLKAGRTAGEVVLGLSEQSVAISRCAGTRLPALLDEQQVNVLLYDMNGCYSRLKELVPTLPQNRKVSKVEILQHVIDYIRDLQLELNSESEVGTTGGRGLPVRAPLSTLNGEISALAAEVRSESEYYIILQWETEATGGGCPPSLLFRRIAI</sequence>
<protein>
    <recommendedName>
        <fullName>DNA-binding protein inhibitor ID-1</fullName>
    </recommendedName>
    <alternativeName>
        <fullName>Inhibitor of DNA binding 1</fullName>
    </alternativeName>
    <alternativeName>
        <fullName>Inhibitor of differentiation 1</fullName>
    </alternativeName>
</protein>